<accession>Q9D489</accession>
<accession>Q4JI40</accession>
<name>SOLH2_MOUSE</name>
<proteinExistence type="evidence at protein level"/>
<feature type="chain" id="PRO_0000315701" description="Spermatogenesis- and oogenesis-specific basic helix-loop-helix-containing protein 2">
    <location>
        <begin position="1"/>
        <end position="467"/>
    </location>
</feature>
<feature type="domain" description="bHLH" evidence="1">
    <location>
        <begin position="200"/>
        <end position="251"/>
    </location>
</feature>
<feature type="region of interest" description="Disordered" evidence="2">
    <location>
        <begin position="443"/>
        <end position="467"/>
    </location>
</feature>
<feature type="compositionally biased region" description="Low complexity" evidence="2">
    <location>
        <begin position="443"/>
        <end position="453"/>
    </location>
</feature>
<feature type="sequence conflict" description="In Ref. 2; BAB30389." evidence="6" ref="2">
    <original>RP</original>
    <variation>SV</variation>
    <location>
        <begin position="13"/>
        <end position="14"/>
    </location>
</feature>
<gene>
    <name type="primary">Sohlh2</name>
    <name type="synonym">Tohlh2</name>
</gene>
<keyword id="KW-0963">Cytoplasm</keyword>
<keyword id="KW-0217">Developmental protein</keyword>
<keyword id="KW-0221">Differentiation</keyword>
<keyword id="KW-0238">DNA-binding</keyword>
<keyword id="KW-0539">Nucleus</keyword>
<keyword id="KW-0896">Oogenesis</keyword>
<keyword id="KW-1185">Reference proteome</keyword>
<keyword id="KW-0744">Spermatogenesis</keyword>
<keyword id="KW-0804">Transcription</keyword>
<keyword id="KW-0805">Transcription regulation</keyword>
<evidence type="ECO:0000255" key="1">
    <source>
        <dbReference type="PROSITE-ProRule" id="PRU00981"/>
    </source>
</evidence>
<evidence type="ECO:0000256" key="2">
    <source>
        <dbReference type="SAM" id="MobiDB-lite"/>
    </source>
</evidence>
<evidence type="ECO:0000269" key="3">
    <source>
    </source>
</evidence>
<evidence type="ECO:0000269" key="4">
    <source>
    </source>
</evidence>
<evidence type="ECO:0000269" key="5">
    <source>
    </source>
</evidence>
<evidence type="ECO:0000305" key="6"/>
<sequence>MADRISTGELGRRPGQGRVNLLLVGDATRYFLAGSMQKFFPSTAQITLTISNVKKVAVLLAANSFDIIFLKVTSTLTAEEQEAAKLIRSGKKKNTHLLFAFVIPERLKGYVSEYGADISFSEPLTLEKVNTVIHYWKTYFTNTDMENTELPPECRLYFQTSRSELGGRFSTDMFLCSELLKNDARLGLKAPLSSLDKSKQASFLHSTKEKLRRERIKSCCEQLRTLLPYVKGRKSDVASVIEATVDYVKQVRESLSPAIMAQVTEAIQNNRRFSKRQMPIELFLPFSATSQREDAMLTSAFSPVQEIQLLADRGLNVYSMTAAGGALEGAVRGQPGSVSESSIEDLYKTRVPSTARSLNSFHSVKYTSGTVSPHEAAARTNQNISTYLPPTAPSVSNFIPQHCNAMLCPARPTSPNCLCTPGHELAASSRAASASIFRGFRAASASDHQASQPPALPSPQPHDSSYF</sequence>
<protein>
    <recommendedName>
        <fullName>Spermatogenesis- and oogenesis-specific basic helix-loop-helix-containing protein 2</fullName>
    </recommendedName>
</protein>
<comment type="function">
    <text evidence="4 5">Transcription regulator of both male and female germline differentiation. Suppresses genes involved in spermatogonial stem cells maintenance, and induces genes important for spermatogonial differentiation (PubMed:22056784). Coordinates oocyte differentiation without affecting meiosis I (PubMed:28504655).</text>
</comment>
<comment type="subunit">
    <text evidence="4">Forms both hetero- and homodimers with SOHLH1.</text>
</comment>
<comment type="subcellular location">
    <subcellularLocation>
        <location evidence="1 3 5">Nucleus</location>
    </subcellularLocation>
    <subcellularLocation>
        <location evidence="5">Cytoplasm</location>
    </subcellularLocation>
    <text evidence="5">Translocates from the cytoplasm into the nucleus and the translocation is dependent on SOHLH1 protein expression.</text>
</comment>
<comment type="tissue specificity">
    <text evidence="4">Preferentially expressed in the adult ovary and testis. Expressed in the majority of spermatogonia in adult animals, but not in the most undifferentiated spermatogonial population (PubMed:22056784).</text>
</comment>
<comment type="developmental stage">
    <text evidence="3 5">In the embryonic gonads it is expressed as early as 13.5 dpc and later. In 3-day-old postnatal ovaries, it is expressed within oocytes in germ cell clusters and primordial follicles. In the adult, it is expressed only in small follicles, primary primordial and primary follicles. In testis, it is exclusively present in spermatogonia. Present at postnatal day 5, when spermatogonia stem cells differentiate into type A spermatogonia. Absent in Sertoli cells or spermatocytes (at protein level). Expressed in the germline as early as 12.5 dpc and precedes SOHLH1 protein expression, which occurred circa 15.5 dpc. SOHLH1 appearance at 15.5 dpc correlates with SOHLH2 translocation from the cytoplasm into the nucleus (PubMed:28504655).</text>
</comment>
<comment type="induction">
    <text>Up-regulated in mice lacking Sohlh1.</text>
</comment>
<comment type="disruption phenotype">
    <text evidence="5">Knockout mice are infertile. Infertility could not be rescued by SOHLH1 or SOHLH2 transgene expression due to a lack of expression of either genes in rescued animals.</text>
</comment>
<organism>
    <name type="scientific">Mus musculus</name>
    <name type="common">Mouse</name>
    <dbReference type="NCBI Taxonomy" id="10090"/>
    <lineage>
        <taxon>Eukaryota</taxon>
        <taxon>Metazoa</taxon>
        <taxon>Chordata</taxon>
        <taxon>Craniata</taxon>
        <taxon>Vertebrata</taxon>
        <taxon>Euteleostomi</taxon>
        <taxon>Mammalia</taxon>
        <taxon>Eutheria</taxon>
        <taxon>Euarchontoglires</taxon>
        <taxon>Glires</taxon>
        <taxon>Rodentia</taxon>
        <taxon>Myomorpha</taxon>
        <taxon>Muroidea</taxon>
        <taxon>Muridae</taxon>
        <taxon>Murinae</taxon>
        <taxon>Mus</taxon>
        <taxon>Mus</taxon>
    </lineage>
</organism>
<dbReference type="EMBL" id="DQ086115">
    <property type="protein sequence ID" value="AAY86077.1"/>
    <property type="molecule type" value="mRNA"/>
</dbReference>
<dbReference type="EMBL" id="AK016704">
    <property type="protein sequence ID" value="BAB30389.1"/>
    <property type="molecule type" value="mRNA"/>
</dbReference>
<dbReference type="EMBL" id="BC120917">
    <property type="protein sequence ID" value="AAI20918.1"/>
    <property type="molecule type" value="mRNA"/>
</dbReference>
<dbReference type="EMBL" id="BC120918">
    <property type="protein sequence ID" value="AAI20919.1"/>
    <property type="molecule type" value="mRNA"/>
</dbReference>
<dbReference type="CCDS" id="CCDS17358.1"/>
<dbReference type="RefSeq" id="NP_083213.2">
    <property type="nucleotide sequence ID" value="NM_028937.3"/>
</dbReference>
<dbReference type="SMR" id="Q9D489"/>
<dbReference type="BioGRID" id="216744">
    <property type="interactions" value="1"/>
</dbReference>
<dbReference type="FunCoup" id="Q9D489">
    <property type="interactions" value="645"/>
</dbReference>
<dbReference type="STRING" id="10090.ENSMUSP00000029369"/>
<dbReference type="PhosphoSitePlus" id="Q9D489"/>
<dbReference type="PaxDb" id="10090-ENSMUSP00000029369"/>
<dbReference type="ProteomicsDB" id="261602"/>
<dbReference type="DNASU" id="74434"/>
<dbReference type="Ensembl" id="ENSMUST00000029369.5">
    <property type="protein sequence ID" value="ENSMUSP00000029369.5"/>
    <property type="gene ID" value="ENSMUSG00000027794.5"/>
</dbReference>
<dbReference type="GeneID" id="74434"/>
<dbReference type="KEGG" id="mmu:74434"/>
<dbReference type="UCSC" id="uc008pgi.2">
    <property type="organism name" value="mouse"/>
</dbReference>
<dbReference type="AGR" id="MGI:1921684"/>
<dbReference type="CTD" id="54937"/>
<dbReference type="MGI" id="MGI:1921684">
    <property type="gene designation" value="Sohlh2"/>
</dbReference>
<dbReference type="VEuPathDB" id="HostDB:ENSMUSG00000027794"/>
<dbReference type="eggNOG" id="ENOG502S71C">
    <property type="taxonomic scope" value="Eukaryota"/>
</dbReference>
<dbReference type="GeneTree" id="ENSGT00390000016050"/>
<dbReference type="HOGENOM" id="CLU_056118_0_0_1"/>
<dbReference type="InParanoid" id="Q9D489"/>
<dbReference type="OMA" id="NIVVKYW"/>
<dbReference type="OrthoDB" id="9948648at2759"/>
<dbReference type="PhylomeDB" id="Q9D489"/>
<dbReference type="TreeFam" id="TF336841"/>
<dbReference type="BioGRID-ORCS" id="74434">
    <property type="hits" value="2 hits in 77 CRISPR screens"/>
</dbReference>
<dbReference type="PRO" id="PR:Q9D489"/>
<dbReference type="Proteomes" id="UP000000589">
    <property type="component" value="Chromosome 3"/>
</dbReference>
<dbReference type="RNAct" id="Q9D489">
    <property type="molecule type" value="protein"/>
</dbReference>
<dbReference type="Bgee" id="ENSMUSG00000027794">
    <property type="expression patterns" value="Expressed in ectoplacental cone and 29 other cell types or tissues"/>
</dbReference>
<dbReference type="GO" id="GO:0005737">
    <property type="term" value="C:cytoplasm"/>
    <property type="evidence" value="ECO:0007669"/>
    <property type="project" value="UniProtKB-SubCell"/>
</dbReference>
<dbReference type="GO" id="GO:0005634">
    <property type="term" value="C:nucleus"/>
    <property type="evidence" value="ECO:0007669"/>
    <property type="project" value="UniProtKB-SubCell"/>
</dbReference>
<dbReference type="GO" id="GO:0001228">
    <property type="term" value="F:DNA-binding transcription activator activity, RNA polymerase II-specific"/>
    <property type="evidence" value="ECO:0000314"/>
    <property type="project" value="NTNU_SB"/>
</dbReference>
<dbReference type="GO" id="GO:0042802">
    <property type="term" value="F:identical protein binding"/>
    <property type="evidence" value="ECO:0000353"/>
    <property type="project" value="MGI"/>
</dbReference>
<dbReference type="GO" id="GO:0046982">
    <property type="term" value="F:protein heterodimerization activity"/>
    <property type="evidence" value="ECO:0000314"/>
    <property type="project" value="UniProtKB"/>
</dbReference>
<dbReference type="GO" id="GO:0042803">
    <property type="term" value="F:protein homodimerization activity"/>
    <property type="evidence" value="ECO:0000314"/>
    <property type="project" value="UniProtKB"/>
</dbReference>
<dbReference type="GO" id="GO:0000977">
    <property type="term" value="F:RNA polymerase II transcription regulatory region sequence-specific DNA binding"/>
    <property type="evidence" value="ECO:0000314"/>
    <property type="project" value="NTNU_SB"/>
</dbReference>
<dbReference type="GO" id="GO:0030154">
    <property type="term" value="P:cell differentiation"/>
    <property type="evidence" value="ECO:0000314"/>
    <property type="project" value="UniProtKB"/>
</dbReference>
<dbReference type="GO" id="GO:0009994">
    <property type="term" value="P:oocyte differentiation"/>
    <property type="evidence" value="ECO:0000314"/>
    <property type="project" value="UniProtKB"/>
</dbReference>
<dbReference type="GO" id="GO:0045944">
    <property type="term" value="P:positive regulation of transcription by RNA polymerase II"/>
    <property type="evidence" value="ECO:0000314"/>
    <property type="project" value="NTNU_SB"/>
</dbReference>
<dbReference type="GO" id="GO:0001545">
    <property type="term" value="P:primary ovarian follicle growth"/>
    <property type="evidence" value="ECO:0000315"/>
    <property type="project" value="MGI"/>
</dbReference>
<dbReference type="GO" id="GO:0010468">
    <property type="term" value="P:regulation of gene expression"/>
    <property type="evidence" value="ECO:0000315"/>
    <property type="project" value="MGI"/>
</dbReference>
<dbReference type="GO" id="GO:0007283">
    <property type="term" value="P:spermatogenesis"/>
    <property type="evidence" value="ECO:0000314"/>
    <property type="project" value="UniProtKB"/>
</dbReference>
<dbReference type="CDD" id="cd18908">
    <property type="entry name" value="bHLH_SOHLH1_2"/>
    <property type="match status" value="1"/>
</dbReference>
<dbReference type="FunFam" id="4.10.280.10:FF:000071">
    <property type="entry name" value="spermatogenesis- and oogenesis-specific basic helix-loop-helix-containing protein 2"/>
    <property type="match status" value="1"/>
</dbReference>
<dbReference type="Gene3D" id="4.10.280.10">
    <property type="entry name" value="Helix-loop-helix DNA-binding domain"/>
    <property type="match status" value="1"/>
</dbReference>
<dbReference type="InterPro" id="IPR011598">
    <property type="entry name" value="bHLH_dom"/>
</dbReference>
<dbReference type="InterPro" id="IPR036638">
    <property type="entry name" value="HLH_DNA-bd_sf"/>
</dbReference>
<dbReference type="InterPro" id="IPR039583">
    <property type="entry name" value="TCFL5/SOLH1/2"/>
</dbReference>
<dbReference type="PANTHER" id="PTHR15402:SF4">
    <property type="entry name" value="SPERMATOGENESIS- AND OOGENESIS-SPECIFIC BASIC HELIX-LOOP-HELIX-CONTAINING PROTEIN 1"/>
    <property type="match status" value="1"/>
</dbReference>
<dbReference type="PANTHER" id="PTHR15402">
    <property type="entry name" value="TRANSCRIPTION FACTOR-LIKE 5 PROTEIN"/>
    <property type="match status" value="1"/>
</dbReference>
<dbReference type="Pfam" id="PF00010">
    <property type="entry name" value="HLH"/>
    <property type="match status" value="1"/>
</dbReference>
<dbReference type="SMART" id="SM00353">
    <property type="entry name" value="HLH"/>
    <property type="match status" value="1"/>
</dbReference>
<dbReference type="SUPFAM" id="SSF47459">
    <property type="entry name" value="HLH, helix-loop-helix DNA-binding domain"/>
    <property type="match status" value="1"/>
</dbReference>
<dbReference type="PROSITE" id="PS50888">
    <property type="entry name" value="BHLH"/>
    <property type="match status" value="1"/>
</dbReference>
<reference key="1">
    <citation type="journal article" date="2006" name="Gene Expr. Patterns">
        <title>Sohlh2 is a germ cell-specific bHLH transcription factor.</title>
        <authorList>
            <person name="Ballow D.J."/>
            <person name="Xin Y."/>
            <person name="Choi Y."/>
            <person name="Pangas S.A."/>
            <person name="Rajkovic A."/>
        </authorList>
    </citation>
    <scope>NUCLEOTIDE SEQUENCE [MRNA]</scope>
    <scope>SUBCELLULAR LOCATION</scope>
    <scope>TISSUE SPECIFICITY</scope>
    <scope>DEVELOPMENTAL STAGE</scope>
    <source>
        <strain>C57BL/6J</strain>
    </source>
</reference>
<reference key="2">
    <citation type="journal article" date="2005" name="Science">
        <title>The transcriptional landscape of the mammalian genome.</title>
        <authorList>
            <person name="Carninci P."/>
            <person name="Kasukawa T."/>
            <person name="Katayama S."/>
            <person name="Gough J."/>
            <person name="Frith M.C."/>
            <person name="Maeda N."/>
            <person name="Oyama R."/>
            <person name="Ravasi T."/>
            <person name="Lenhard B."/>
            <person name="Wells C."/>
            <person name="Kodzius R."/>
            <person name="Shimokawa K."/>
            <person name="Bajic V.B."/>
            <person name="Brenner S.E."/>
            <person name="Batalov S."/>
            <person name="Forrest A.R."/>
            <person name="Zavolan M."/>
            <person name="Davis M.J."/>
            <person name="Wilming L.G."/>
            <person name="Aidinis V."/>
            <person name="Allen J.E."/>
            <person name="Ambesi-Impiombato A."/>
            <person name="Apweiler R."/>
            <person name="Aturaliya R.N."/>
            <person name="Bailey T.L."/>
            <person name="Bansal M."/>
            <person name="Baxter L."/>
            <person name="Beisel K.W."/>
            <person name="Bersano T."/>
            <person name="Bono H."/>
            <person name="Chalk A.M."/>
            <person name="Chiu K.P."/>
            <person name="Choudhary V."/>
            <person name="Christoffels A."/>
            <person name="Clutterbuck D.R."/>
            <person name="Crowe M.L."/>
            <person name="Dalla E."/>
            <person name="Dalrymple B.P."/>
            <person name="de Bono B."/>
            <person name="Della Gatta G."/>
            <person name="di Bernardo D."/>
            <person name="Down T."/>
            <person name="Engstrom P."/>
            <person name="Fagiolini M."/>
            <person name="Faulkner G."/>
            <person name="Fletcher C.F."/>
            <person name="Fukushima T."/>
            <person name="Furuno M."/>
            <person name="Futaki S."/>
            <person name="Gariboldi M."/>
            <person name="Georgii-Hemming P."/>
            <person name="Gingeras T.R."/>
            <person name="Gojobori T."/>
            <person name="Green R.E."/>
            <person name="Gustincich S."/>
            <person name="Harbers M."/>
            <person name="Hayashi Y."/>
            <person name="Hensch T.K."/>
            <person name="Hirokawa N."/>
            <person name="Hill D."/>
            <person name="Huminiecki L."/>
            <person name="Iacono M."/>
            <person name="Ikeo K."/>
            <person name="Iwama A."/>
            <person name="Ishikawa T."/>
            <person name="Jakt M."/>
            <person name="Kanapin A."/>
            <person name="Katoh M."/>
            <person name="Kawasawa Y."/>
            <person name="Kelso J."/>
            <person name="Kitamura H."/>
            <person name="Kitano H."/>
            <person name="Kollias G."/>
            <person name="Krishnan S.P."/>
            <person name="Kruger A."/>
            <person name="Kummerfeld S.K."/>
            <person name="Kurochkin I.V."/>
            <person name="Lareau L.F."/>
            <person name="Lazarevic D."/>
            <person name="Lipovich L."/>
            <person name="Liu J."/>
            <person name="Liuni S."/>
            <person name="McWilliam S."/>
            <person name="Madan Babu M."/>
            <person name="Madera M."/>
            <person name="Marchionni L."/>
            <person name="Matsuda H."/>
            <person name="Matsuzawa S."/>
            <person name="Miki H."/>
            <person name="Mignone F."/>
            <person name="Miyake S."/>
            <person name="Morris K."/>
            <person name="Mottagui-Tabar S."/>
            <person name="Mulder N."/>
            <person name="Nakano N."/>
            <person name="Nakauchi H."/>
            <person name="Ng P."/>
            <person name="Nilsson R."/>
            <person name="Nishiguchi S."/>
            <person name="Nishikawa S."/>
            <person name="Nori F."/>
            <person name="Ohara O."/>
            <person name="Okazaki Y."/>
            <person name="Orlando V."/>
            <person name="Pang K.C."/>
            <person name="Pavan W.J."/>
            <person name="Pavesi G."/>
            <person name="Pesole G."/>
            <person name="Petrovsky N."/>
            <person name="Piazza S."/>
            <person name="Reed J."/>
            <person name="Reid J.F."/>
            <person name="Ring B.Z."/>
            <person name="Ringwald M."/>
            <person name="Rost B."/>
            <person name="Ruan Y."/>
            <person name="Salzberg S.L."/>
            <person name="Sandelin A."/>
            <person name="Schneider C."/>
            <person name="Schoenbach C."/>
            <person name="Sekiguchi K."/>
            <person name="Semple C.A."/>
            <person name="Seno S."/>
            <person name="Sessa L."/>
            <person name="Sheng Y."/>
            <person name="Shibata Y."/>
            <person name="Shimada H."/>
            <person name="Shimada K."/>
            <person name="Silva D."/>
            <person name="Sinclair B."/>
            <person name="Sperling S."/>
            <person name="Stupka E."/>
            <person name="Sugiura K."/>
            <person name="Sultana R."/>
            <person name="Takenaka Y."/>
            <person name="Taki K."/>
            <person name="Tammoja K."/>
            <person name="Tan S.L."/>
            <person name="Tang S."/>
            <person name="Taylor M.S."/>
            <person name="Tegner J."/>
            <person name="Teichmann S.A."/>
            <person name="Ueda H.R."/>
            <person name="van Nimwegen E."/>
            <person name="Verardo R."/>
            <person name="Wei C.L."/>
            <person name="Yagi K."/>
            <person name="Yamanishi H."/>
            <person name="Zabarovsky E."/>
            <person name="Zhu S."/>
            <person name="Zimmer A."/>
            <person name="Hide W."/>
            <person name="Bult C."/>
            <person name="Grimmond S.M."/>
            <person name="Teasdale R.D."/>
            <person name="Liu E.T."/>
            <person name="Brusic V."/>
            <person name="Quackenbush J."/>
            <person name="Wahlestedt C."/>
            <person name="Mattick J.S."/>
            <person name="Hume D.A."/>
            <person name="Kai C."/>
            <person name="Sasaki D."/>
            <person name="Tomaru Y."/>
            <person name="Fukuda S."/>
            <person name="Kanamori-Katayama M."/>
            <person name="Suzuki M."/>
            <person name="Aoki J."/>
            <person name="Arakawa T."/>
            <person name="Iida J."/>
            <person name="Imamura K."/>
            <person name="Itoh M."/>
            <person name="Kato T."/>
            <person name="Kawaji H."/>
            <person name="Kawagashira N."/>
            <person name="Kawashima T."/>
            <person name="Kojima M."/>
            <person name="Kondo S."/>
            <person name="Konno H."/>
            <person name="Nakano K."/>
            <person name="Ninomiya N."/>
            <person name="Nishio T."/>
            <person name="Okada M."/>
            <person name="Plessy C."/>
            <person name="Shibata K."/>
            <person name="Shiraki T."/>
            <person name="Suzuki S."/>
            <person name="Tagami M."/>
            <person name="Waki K."/>
            <person name="Watahiki A."/>
            <person name="Okamura-Oho Y."/>
            <person name="Suzuki H."/>
            <person name="Kawai J."/>
            <person name="Hayashizaki Y."/>
        </authorList>
    </citation>
    <scope>NUCLEOTIDE SEQUENCE [LARGE SCALE MRNA]</scope>
    <source>
        <strain>C57BL/6J</strain>
        <tissue>Testis</tissue>
    </source>
</reference>
<reference key="3">
    <citation type="journal article" date="2004" name="Genome Res.">
        <title>The status, quality, and expansion of the NIH full-length cDNA project: the Mammalian Gene Collection (MGC).</title>
        <authorList>
            <consortium name="The MGC Project Team"/>
        </authorList>
    </citation>
    <scope>NUCLEOTIDE SEQUENCE [LARGE SCALE MRNA]</scope>
</reference>
<reference key="4">
    <citation type="journal article" date="2006" name="Dev. Biol.">
        <title>Sohlh1 is essential for spermatogonial differentiation.</title>
        <authorList>
            <person name="Ballow D."/>
            <person name="Meistrich M.L."/>
            <person name="Matzuk M."/>
            <person name="Rajkovic A."/>
        </authorList>
    </citation>
    <scope>TISSUE SPECIFICITY</scope>
    <scope>INDUCTION</scope>
</reference>
<reference key="5">
    <citation type="journal article" date="2012" name="Dev. Biol.">
        <title>SOHLH1 and SOHLH2 coordinate spermatogonial differentiation.</title>
        <authorList>
            <person name="Suzuki H."/>
            <person name="Ahn H.W."/>
            <person name="Chu T."/>
            <person name="Bowden W."/>
            <person name="Gassei K."/>
            <person name="Orwig K."/>
            <person name="Rajkovic A."/>
        </authorList>
    </citation>
    <scope>TISSUE SPECIFICITY</scope>
    <scope>FUNCTION</scope>
    <scope>SUBUNIT</scope>
</reference>
<reference key="6">
    <citation type="journal article" date="2017" name="J. Clin. Invest.">
        <title>Transcription factors SOHLH1 and SOHLH2 coordinate oocyte differentiation without affecting meiosis I.</title>
        <authorList>
            <person name="Shin Y.H."/>
            <person name="Ren Y."/>
            <person name="Suzuki H."/>
            <person name="Golnoski K.J."/>
            <person name="Ahn H.W."/>
            <person name="Mico V."/>
            <person name="Rajkovic A."/>
        </authorList>
    </citation>
    <scope>DISRUPTION PHENOTYPE</scope>
    <scope>FUNCTION</scope>
    <scope>SUBCELLULAR LOCATION</scope>
    <scope>DEVELOPMENTAL STAGE</scope>
</reference>